<proteinExistence type="inferred from homology"/>
<name>SYS_MYCBO</name>
<protein>
    <recommendedName>
        <fullName evidence="1">Serine--tRNA ligase</fullName>
        <ecNumber evidence="1">6.1.1.11</ecNumber>
    </recommendedName>
    <alternativeName>
        <fullName evidence="1">Seryl-tRNA synthetase</fullName>
        <shortName evidence="1">SerRS</shortName>
    </alternativeName>
    <alternativeName>
        <fullName evidence="1">Seryl-tRNA(Ser/Sec) synthetase</fullName>
    </alternativeName>
</protein>
<accession>P67562</accession>
<accession>A0A1R3Y5E5</accession>
<accession>P96244</accession>
<accession>X2BQ34</accession>
<evidence type="ECO:0000255" key="1">
    <source>
        <dbReference type="HAMAP-Rule" id="MF_00176"/>
    </source>
</evidence>
<sequence length="419" mass="45324">MIDLKLLRENPDAVRRSQLSRGEDPALVDALLTADAARRAVISTADSLRAEQKAASKSVGGASPEERPPLLRRAKELAEQVKAAEADEVEAEAAFTAAHLAISNVIVDGVPAGGEDDYAVLDVVGEPSYLENPKDHLELGESLGLIDMQRGAKVSGSRFYFLTGRGALLQLGLLQLALKLAVDNGFVPTIPPVLVRPEVMVGTGFLGAHAEEVYRVEGDGLYLVGTSEVPLAGYHSGEILDLSRGPLRYAGWSSCFRREAGSHGKDTRGIIRVHQFDKVEGFVYCTPADAEHEHERLLGWQRQMLARIEVPYRVIDVAAGDLGSSAARKFDCEAWIPTQGAYRELTSTSNCTTFQARRLATRYRDASGKPQIAATLNGTLATTRWLVAILENHQRPDGSVRVPDALVPFVGVEVLEPVA</sequence>
<keyword id="KW-0030">Aminoacyl-tRNA synthetase</keyword>
<keyword id="KW-0067">ATP-binding</keyword>
<keyword id="KW-0963">Cytoplasm</keyword>
<keyword id="KW-0436">Ligase</keyword>
<keyword id="KW-0547">Nucleotide-binding</keyword>
<keyword id="KW-0648">Protein biosynthesis</keyword>
<keyword id="KW-1185">Reference proteome</keyword>
<dbReference type="EC" id="6.1.1.11" evidence="1"/>
<dbReference type="EMBL" id="LT708304">
    <property type="protein sequence ID" value="SIU02493.1"/>
    <property type="molecule type" value="Genomic_DNA"/>
</dbReference>
<dbReference type="RefSeq" id="NP_857501.1">
    <property type="nucleotide sequence ID" value="NC_002945.3"/>
</dbReference>
<dbReference type="RefSeq" id="WP_003420889.1">
    <property type="nucleotide sequence ID" value="NC_002945.4"/>
</dbReference>
<dbReference type="SMR" id="P67562"/>
<dbReference type="GeneID" id="45427835"/>
<dbReference type="KEGG" id="mbo:BQ2027_MB3864C"/>
<dbReference type="PATRIC" id="fig|233413.5.peg.4226"/>
<dbReference type="UniPathway" id="UPA00906">
    <property type="reaction ID" value="UER00895"/>
</dbReference>
<dbReference type="Proteomes" id="UP000001419">
    <property type="component" value="Chromosome"/>
</dbReference>
<dbReference type="GO" id="GO:0005737">
    <property type="term" value="C:cytoplasm"/>
    <property type="evidence" value="ECO:0007669"/>
    <property type="project" value="UniProtKB-SubCell"/>
</dbReference>
<dbReference type="GO" id="GO:0005524">
    <property type="term" value="F:ATP binding"/>
    <property type="evidence" value="ECO:0007669"/>
    <property type="project" value="UniProtKB-UniRule"/>
</dbReference>
<dbReference type="GO" id="GO:0004828">
    <property type="term" value="F:serine-tRNA ligase activity"/>
    <property type="evidence" value="ECO:0007669"/>
    <property type="project" value="UniProtKB-UniRule"/>
</dbReference>
<dbReference type="GO" id="GO:0016260">
    <property type="term" value="P:selenocysteine biosynthetic process"/>
    <property type="evidence" value="ECO:0007669"/>
    <property type="project" value="UniProtKB-UniRule"/>
</dbReference>
<dbReference type="GO" id="GO:0006434">
    <property type="term" value="P:seryl-tRNA aminoacylation"/>
    <property type="evidence" value="ECO:0007669"/>
    <property type="project" value="UniProtKB-UniRule"/>
</dbReference>
<dbReference type="CDD" id="cd00770">
    <property type="entry name" value="SerRS_core"/>
    <property type="match status" value="1"/>
</dbReference>
<dbReference type="FunFam" id="1.10.287.40:FF:000004">
    <property type="entry name" value="Serine--tRNA ligase"/>
    <property type="match status" value="1"/>
</dbReference>
<dbReference type="FunFam" id="3.30.930.10:FF:000048">
    <property type="entry name" value="Serine--tRNA ligase"/>
    <property type="match status" value="1"/>
</dbReference>
<dbReference type="Gene3D" id="3.30.930.10">
    <property type="entry name" value="Bira Bifunctional Protein, Domain 2"/>
    <property type="match status" value="1"/>
</dbReference>
<dbReference type="Gene3D" id="1.10.287.40">
    <property type="entry name" value="Serine-tRNA synthetase, tRNA binding domain"/>
    <property type="match status" value="1"/>
</dbReference>
<dbReference type="HAMAP" id="MF_00176">
    <property type="entry name" value="Ser_tRNA_synth_type1"/>
    <property type="match status" value="1"/>
</dbReference>
<dbReference type="InterPro" id="IPR002314">
    <property type="entry name" value="aa-tRNA-synt_IIb"/>
</dbReference>
<dbReference type="InterPro" id="IPR006195">
    <property type="entry name" value="aa-tRNA-synth_II"/>
</dbReference>
<dbReference type="InterPro" id="IPR045864">
    <property type="entry name" value="aa-tRNA-synth_II/BPL/LPL"/>
</dbReference>
<dbReference type="InterPro" id="IPR002317">
    <property type="entry name" value="Ser-tRNA-ligase_type_1"/>
</dbReference>
<dbReference type="InterPro" id="IPR015866">
    <property type="entry name" value="Ser-tRNA-synth_1_N"/>
</dbReference>
<dbReference type="InterPro" id="IPR042103">
    <property type="entry name" value="SerRS_1_N_sf"/>
</dbReference>
<dbReference type="InterPro" id="IPR033729">
    <property type="entry name" value="SerRS_core"/>
</dbReference>
<dbReference type="InterPro" id="IPR010978">
    <property type="entry name" value="tRNA-bd_arm"/>
</dbReference>
<dbReference type="NCBIfam" id="TIGR00414">
    <property type="entry name" value="serS"/>
    <property type="match status" value="1"/>
</dbReference>
<dbReference type="PANTHER" id="PTHR11778">
    <property type="entry name" value="SERYL-TRNA SYNTHETASE"/>
    <property type="match status" value="1"/>
</dbReference>
<dbReference type="Pfam" id="PF02403">
    <property type="entry name" value="Seryl_tRNA_N"/>
    <property type="match status" value="1"/>
</dbReference>
<dbReference type="Pfam" id="PF00587">
    <property type="entry name" value="tRNA-synt_2b"/>
    <property type="match status" value="1"/>
</dbReference>
<dbReference type="PIRSF" id="PIRSF001529">
    <property type="entry name" value="Ser-tRNA-synth_IIa"/>
    <property type="match status" value="1"/>
</dbReference>
<dbReference type="PRINTS" id="PR00981">
    <property type="entry name" value="TRNASYNTHSER"/>
</dbReference>
<dbReference type="SUPFAM" id="SSF55681">
    <property type="entry name" value="Class II aaRS and biotin synthetases"/>
    <property type="match status" value="1"/>
</dbReference>
<dbReference type="SUPFAM" id="SSF46589">
    <property type="entry name" value="tRNA-binding arm"/>
    <property type="match status" value="1"/>
</dbReference>
<dbReference type="PROSITE" id="PS50862">
    <property type="entry name" value="AA_TRNA_LIGASE_II"/>
    <property type="match status" value="1"/>
</dbReference>
<reference key="1">
    <citation type="journal article" date="2003" name="Proc. Natl. Acad. Sci. U.S.A.">
        <title>The complete genome sequence of Mycobacterium bovis.</title>
        <authorList>
            <person name="Garnier T."/>
            <person name="Eiglmeier K."/>
            <person name="Camus J.-C."/>
            <person name="Medina N."/>
            <person name="Mansoor H."/>
            <person name="Pryor M."/>
            <person name="Duthoy S."/>
            <person name="Grondin S."/>
            <person name="Lacroix C."/>
            <person name="Monsempe C."/>
            <person name="Simon S."/>
            <person name="Harris B."/>
            <person name="Atkin R."/>
            <person name="Doggett J."/>
            <person name="Mayes R."/>
            <person name="Keating L."/>
            <person name="Wheeler P.R."/>
            <person name="Parkhill J."/>
            <person name="Barrell B.G."/>
            <person name="Cole S.T."/>
            <person name="Gordon S.V."/>
            <person name="Hewinson R.G."/>
        </authorList>
    </citation>
    <scope>NUCLEOTIDE SEQUENCE [LARGE SCALE GENOMIC DNA]</scope>
    <source>
        <strain>ATCC BAA-935 / AF2122/97</strain>
    </source>
</reference>
<reference key="2">
    <citation type="journal article" date="2017" name="Genome Announc.">
        <title>Updated reference genome sequence and annotation of Mycobacterium bovis AF2122/97.</title>
        <authorList>
            <person name="Malone K.M."/>
            <person name="Farrell D."/>
            <person name="Stuber T.P."/>
            <person name="Schubert O.T."/>
            <person name="Aebersold R."/>
            <person name="Robbe-Austerman S."/>
            <person name="Gordon S.V."/>
        </authorList>
    </citation>
    <scope>NUCLEOTIDE SEQUENCE [LARGE SCALE GENOMIC DNA]</scope>
    <scope>GENOME REANNOTATION</scope>
    <source>
        <strain>ATCC BAA-935 / AF2122/97</strain>
    </source>
</reference>
<comment type="function">
    <text evidence="1">Catalyzes the attachment of serine to tRNA(Ser). Is also able to aminoacylate tRNA(Sec) with serine, to form the misacylated tRNA L-seryl-tRNA(Sec), which will be further converted into selenocysteinyl-tRNA(Sec).</text>
</comment>
<comment type="catalytic activity">
    <reaction evidence="1">
        <text>tRNA(Ser) + L-serine + ATP = L-seryl-tRNA(Ser) + AMP + diphosphate + H(+)</text>
        <dbReference type="Rhea" id="RHEA:12292"/>
        <dbReference type="Rhea" id="RHEA-COMP:9669"/>
        <dbReference type="Rhea" id="RHEA-COMP:9703"/>
        <dbReference type="ChEBI" id="CHEBI:15378"/>
        <dbReference type="ChEBI" id="CHEBI:30616"/>
        <dbReference type="ChEBI" id="CHEBI:33019"/>
        <dbReference type="ChEBI" id="CHEBI:33384"/>
        <dbReference type="ChEBI" id="CHEBI:78442"/>
        <dbReference type="ChEBI" id="CHEBI:78533"/>
        <dbReference type="ChEBI" id="CHEBI:456215"/>
        <dbReference type="EC" id="6.1.1.11"/>
    </reaction>
</comment>
<comment type="catalytic activity">
    <reaction evidence="1">
        <text>tRNA(Sec) + L-serine + ATP = L-seryl-tRNA(Sec) + AMP + diphosphate + H(+)</text>
        <dbReference type="Rhea" id="RHEA:42580"/>
        <dbReference type="Rhea" id="RHEA-COMP:9742"/>
        <dbReference type="Rhea" id="RHEA-COMP:10128"/>
        <dbReference type="ChEBI" id="CHEBI:15378"/>
        <dbReference type="ChEBI" id="CHEBI:30616"/>
        <dbReference type="ChEBI" id="CHEBI:33019"/>
        <dbReference type="ChEBI" id="CHEBI:33384"/>
        <dbReference type="ChEBI" id="CHEBI:78442"/>
        <dbReference type="ChEBI" id="CHEBI:78533"/>
        <dbReference type="ChEBI" id="CHEBI:456215"/>
        <dbReference type="EC" id="6.1.1.11"/>
    </reaction>
</comment>
<comment type="pathway">
    <text evidence="1">Aminoacyl-tRNA biosynthesis; selenocysteinyl-tRNA(Sec) biosynthesis; L-seryl-tRNA(Sec) from L-serine and tRNA(Sec): step 1/1.</text>
</comment>
<comment type="subunit">
    <text evidence="1">Homodimer. The tRNA molecule binds across the dimer.</text>
</comment>
<comment type="subcellular location">
    <subcellularLocation>
        <location evidence="1">Cytoplasm</location>
    </subcellularLocation>
</comment>
<comment type="domain">
    <text evidence="1">Consists of two distinct domains, a catalytic core and a N-terminal extension that is involved in tRNA binding.</text>
</comment>
<comment type="similarity">
    <text evidence="1">Belongs to the class-II aminoacyl-tRNA synthetase family. Type-1 seryl-tRNA synthetase subfamily.</text>
</comment>
<feature type="chain" id="PRO_0000122087" description="Serine--tRNA ligase">
    <location>
        <begin position="1"/>
        <end position="419"/>
    </location>
</feature>
<feature type="binding site" evidence="1">
    <location>
        <begin position="226"/>
        <end position="228"/>
    </location>
    <ligand>
        <name>L-serine</name>
        <dbReference type="ChEBI" id="CHEBI:33384"/>
    </ligand>
</feature>
<feature type="binding site" evidence="1">
    <location>
        <begin position="257"/>
        <end position="259"/>
    </location>
    <ligand>
        <name>ATP</name>
        <dbReference type="ChEBI" id="CHEBI:30616"/>
    </ligand>
</feature>
<feature type="binding site" evidence="1">
    <location>
        <position position="273"/>
    </location>
    <ligand>
        <name>ATP</name>
        <dbReference type="ChEBI" id="CHEBI:30616"/>
    </ligand>
</feature>
<feature type="binding site" evidence="1">
    <location>
        <position position="280"/>
    </location>
    <ligand>
        <name>L-serine</name>
        <dbReference type="ChEBI" id="CHEBI:33384"/>
    </ligand>
</feature>
<feature type="binding site" evidence="1">
    <location>
        <begin position="344"/>
        <end position="347"/>
    </location>
    <ligand>
        <name>ATP</name>
        <dbReference type="ChEBI" id="CHEBI:30616"/>
    </ligand>
</feature>
<feature type="binding site" evidence="1">
    <location>
        <position position="379"/>
    </location>
    <ligand>
        <name>L-serine</name>
        <dbReference type="ChEBI" id="CHEBI:33384"/>
    </ligand>
</feature>
<organism>
    <name type="scientific">Mycobacterium bovis (strain ATCC BAA-935 / AF2122/97)</name>
    <dbReference type="NCBI Taxonomy" id="233413"/>
    <lineage>
        <taxon>Bacteria</taxon>
        <taxon>Bacillati</taxon>
        <taxon>Actinomycetota</taxon>
        <taxon>Actinomycetes</taxon>
        <taxon>Mycobacteriales</taxon>
        <taxon>Mycobacteriaceae</taxon>
        <taxon>Mycobacterium</taxon>
        <taxon>Mycobacterium tuberculosis complex</taxon>
    </lineage>
</organism>
<gene>
    <name evidence="1" type="primary">serS</name>
    <name type="ordered locus">BQ2027_MB3864C</name>
</gene>